<sequence>MAEKRNIFLIGPMGAGKSTIGRQLAQMLGMEFIDSDAVIEERAGADIDWIFDLEGETGFRKREERIINELTQNQGVVLSTGGGSVLSKENRNVLSARGIVIYLETTVDKQFERTQRDKKRPLLQTENPRETLEALAKVRNPLYEEIADITLQTDEQSAKLVATHIIELIDNLQ</sequence>
<organism>
    <name type="scientific">Actinobacillus pleuropneumoniae serotype 3 (strain JL03)</name>
    <dbReference type="NCBI Taxonomy" id="434271"/>
    <lineage>
        <taxon>Bacteria</taxon>
        <taxon>Pseudomonadati</taxon>
        <taxon>Pseudomonadota</taxon>
        <taxon>Gammaproteobacteria</taxon>
        <taxon>Pasteurellales</taxon>
        <taxon>Pasteurellaceae</taxon>
        <taxon>Actinobacillus</taxon>
    </lineage>
</organism>
<gene>
    <name evidence="1" type="primary">aroK</name>
    <name type="ordered locus">APJL_0195</name>
</gene>
<feature type="chain" id="PRO_1000094368" description="Shikimate kinase">
    <location>
        <begin position="1"/>
        <end position="173"/>
    </location>
</feature>
<feature type="binding site" evidence="1">
    <location>
        <begin position="14"/>
        <end position="19"/>
    </location>
    <ligand>
        <name>ATP</name>
        <dbReference type="ChEBI" id="CHEBI:30616"/>
    </ligand>
</feature>
<feature type="binding site" evidence="1">
    <location>
        <position position="18"/>
    </location>
    <ligand>
        <name>Mg(2+)</name>
        <dbReference type="ChEBI" id="CHEBI:18420"/>
    </ligand>
</feature>
<feature type="binding site" evidence="1">
    <location>
        <position position="36"/>
    </location>
    <ligand>
        <name>substrate</name>
    </ligand>
</feature>
<feature type="binding site" evidence="1">
    <location>
        <position position="60"/>
    </location>
    <ligand>
        <name>substrate</name>
    </ligand>
</feature>
<feature type="binding site" evidence="1">
    <location>
        <position position="82"/>
    </location>
    <ligand>
        <name>substrate</name>
    </ligand>
</feature>
<feature type="binding site" evidence="1">
    <location>
        <position position="120"/>
    </location>
    <ligand>
        <name>ATP</name>
        <dbReference type="ChEBI" id="CHEBI:30616"/>
    </ligand>
</feature>
<feature type="binding site" evidence="1">
    <location>
        <position position="139"/>
    </location>
    <ligand>
        <name>substrate</name>
    </ligand>
</feature>
<feature type="binding site" evidence="1">
    <location>
        <position position="156"/>
    </location>
    <ligand>
        <name>ATP</name>
        <dbReference type="ChEBI" id="CHEBI:30616"/>
    </ligand>
</feature>
<keyword id="KW-0028">Amino-acid biosynthesis</keyword>
<keyword id="KW-0057">Aromatic amino acid biosynthesis</keyword>
<keyword id="KW-0067">ATP-binding</keyword>
<keyword id="KW-0963">Cytoplasm</keyword>
<keyword id="KW-0418">Kinase</keyword>
<keyword id="KW-0460">Magnesium</keyword>
<keyword id="KW-0479">Metal-binding</keyword>
<keyword id="KW-0547">Nucleotide-binding</keyword>
<keyword id="KW-0808">Transferase</keyword>
<dbReference type="EC" id="2.7.1.71" evidence="1"/>
<dbReference type="EMBL" id="CP000687">
    <property type="protein sequence ID" value="ABY68799.1"/>
    <property type="molecule type" value="Genomic_DNA"/>
</dbReference>
<dbReference type="RefSeq" id="WP_005618763.1">
    <property type="nucleotide sequence ID" value="NC_010278.1"/>
</dbReference>
<dbReference type="SMR" id="B0BSJ7"/>
<dbReference type="GeneID" id="48598341"/>
<dbReference type="KEGG" id="apj:APJL_0195"/>
<dbReference type="HOGENOM" id="CLU_057607_2_2_6"/>
<dbReference type="UniPathway" id="UPA00053">
    <property type="reaction ID" value="UER00088"/>
</dbReference>
<dbReference type="Proteomes" id="UP000008547">
    <property type="component" value="Chromosome"/>
</dbReference>
<dbReference type="GO" id="GO:0005829">
    <property type="term" value="C:cytosol"/>
    <property type="evidence" value="ECO:0007669"/>
    <property type="project" value="TreeGrafter"/>
</dbReference>
<dbReference type="GO" id="GO:0005524">
    <property type="term" value="F:ATP binding"/>
    <property type="evidence" value="ECO:0007669"/>
    <property type="project" value="UniProtKB-UniRule"/>
</dbReference>
<dbReference type="GO" id="GO:0000287">
    <property type="term" value="F:magnesium ion binding"/>
    <property type="evidence" value="ECO:0007669"/>
    <property type="project" value="UniProtKB-UniRule"/>
</dbReference>
<dbReference type="GO" id="GO:0004765">
    <property type="term" value="F:shikimate kinase activity"/>
    <property type="evidence" value="ECO:0007669"/>
    <property type="project" value="UniProtKB-UniRule"/>
</dbReference>
<dbReference type="GO" id="GO:0008652">
    <property type="term" value="P:amino acid biosynthetic process"/>
    <property type="evidence" value="ECO:0007669"/>
    <property type="project" value="UniProtKB-KW"/>
</dbReference>
<dbReference type="GO" id="GO:0009073">
    <property type="term" value="P:aromatic amino acid family biosynthetic process"/>
    <property type="evidence" value="ECO:0007669"/>
    <property type="project" value="UniProtKB-KW"/>
</dbReference>
<dbReference type="GO" id="GO:0009423">
    <property type="term" value="P:chorismate biosynthetic process"/>
    <property type="evidence" value="ECO:0007669"/>
    <property type="project" value="UniProtKB-UniRule"/>
</dbReference>
<dbReference type="CDD" id="cd00464">
    <property type="entry name" value="SK"/>
    <property type="match status" value="1"/>
</dbReference>
<dbReference type="FunFam" id="3.40.50.300:FF:000099">
    <property type="entry name" value="Shikimate kinase 1"/>
    <property type="match status" value="1"/>
</dbReference>
<dbReference type="Gene3D" id="3.40.50.300">
    <property type="entry name" value="P-loop containing nucleotide triphosphate hydrolases"/>
    <property type="match status" value="1"/>
</dbReference>
<dbReference type="HAMAP" id="MF_00109">
    <property type="entry name" value="Shikimate_kinase"/>
    <property type="match status" value="1"/>
</dbReference>
<dbReference type="InterPro" id="IPR027417">
    <property type="entry name" value="P-loop_NTPase"/>
</dbReference>
<dbReference type="InterPro" id="IPR031322">
    <property type="entry name" value="Shikimate/glucono_kinase"/>
</dbReference>
<dbReference type="InterPro" id="IPR000623">
    <property type="entry name" value="Shikimate_kinase/TSH1"/>
</dbReference>
<dbReference type="InterPro" id="IPR023000">
    <property type="entry name" value="Shikimate_kinase_CS"/>
</dbReference>
<dbReference type="NCBIfam" id="NF003456">
    <property type="entry name" value="PRK05057.1"/>
    <property type="match status" value="1"/>
</dbReference>
<dbReference type="PANTHER" id="PTHR21087">
    <property type="entry name" value="SHIKIMATE KINASE"/>
    <property type="match status" value="1"/>
</dbReference>
<dbReference type="PANTHER" id="PTHR21087:SF16">
    <property type="entry name" value="SHIKIMATE KINASE 1, CHLOROPLASTIC"/>
    <property type="match status" value="1"/>
</dbReference>
<dbReference type="Pfam" id="PF01202">
    <property type="entry name" value="SKI"/>
    <property type="match status" value="1"/>
</dbReference>
<dbReference type="PRINTS" id="PR01100">
    <property type="entry name" value="SHIKIMTKNASE"/>
</dbReference>
<dbReference type="SUPFAM" id="SSF52540">
    <property type="entry name" value="P-loop containing nucleoside triphosphate hydrolases"/>
    <property type="match status" value="1"/>
</dbReference>
<dbReference type="PROSITE" id="PS01128">
    <property type="entry name" value="SHIKIMATE_KINASE"/>
    <property type="match status" value="1"/>
</dbReference>
<accession>B0BSJ7</accession>
<protein>
    <recommendedName>
        <fullName evidence="1">Shikimate kinase</fullName>
        <shortName evidence="1">SK</shortName>
        <ecNumber evidence="1">2.7.1.71</ecNumber>
    </recommendedName>
</protein>
<name>AROK_ACTPJ</name>
<comment type="function">
    <text evidence="1">Catalyzes the specific phosphorylation of the 3-hydroxyl group of shikimic acid using ATP as a cosubstrate.</text>
</comment>
<comment type="catalytic activity">
    <reaction evidence="1">
        <text>shikimate + ATP = 3-phosphoshikimate + ADP + H(+)</text>
        <dbReference type="Rhea" id="RHEA:13121"/>
        <dbReference type="ChEBI" id="CHEBI:15378"/>
        <dbReference type="ChEBI" id="CHEBI:30616"/>
        <dbReference type="ChEBI" id="CHEBI:36208"/>
        <dbReference type="ChEBI" id="CHEBI:145989"/>
        <dbReference type="ChEBI" id="CHEBI:456216"/>
        <dbReference type="EC" id="2.7.1.71"/>
    </reaction>
</comment>
<comment type="cofactor">
    <cofactor evidence="1">
        <name>Mg(2+)</name>
        <dbReference type="ChEBI" id="CHEBI:18420"/>
    </cofactor>
    <text evidence="1">Binds 1 Mg(2+) ion per subunit.</text>
</comment>
<comment type="pathway">
    <text evidence="1">Metabolic intermediate biosynthesis; chorismate biosynthesis; chorismate from D-erythrose 4-phosphate and phosphoenolpyruvate: step 5/7.</text>
</comment>
<comment type="subunit">
    <text evidence="1">Monomer.</text>
</comment>
<comment type="subcellular location">
    <subcellularLocation>
        <location evidence="1">Cytoplasm</location>
    </subcellularLocation>
</comment>
<comment type="similarity">
    <text evidence="1">Belongs to the shikimate kinase family.</text>
</comment>
<proteinExistence type="inferred from homology"/>
<evidence type="ECO:0000255" key="1">
    <source>
        <dbReference type="HAMAP-Rule" id="MF_00109"/>
    </source>
</evidence>
<reference key="1">
    <citation type="journal article" date="2008" name="PLoS ONE">
        <title>Genome biology of Actinobacillus pleuropneumoniae JL03, an isolate of serotype 3 prevalent in China.</title>
        <authorList>
            <person name="Xu Z."/>
            <person name="Zhou Y."/>
            <person name="Li L."/>
            <person name="Zhou R."/>
            <person name="Xiao S."/>
            <person name="Wan Y."/>
            <person name="Zhang S."/>
            <person name="Wang K."/>
            <person name="Li W."/>
            <person name="Li L."/>
            <person name="Jin H."/>
            <person name="Kang M."/>
            <person name="Dalai B."/>
            <person name="Li T."/>
            <person name="Liu L."/>
            <person name="Cheng Y."/>
            <person name="Zhang L."/>
            <person name="Xu T."/>
            <person name="Zheng H."/>
            <person name="Pu S."/>
            <person name="Wang B."/>
            <person name="Gu W."/>
            <person name="Zhang X.L."/>
            <person name="Zhu G.-F."/>
            <person name="Wang S."/>
            <person name="Zhao G.-P."/>
            <person name="Chen H."/>
        </authorList>
    </citation>
    <scope>NUCLEOTIDE SEQUENCE [LARGE SCALE GENOMIC DNA]</scope>
    <source>
        <strain>JL03</strain>
    </source>
</reference>